<name>RNFB_RHOCA</name>
<reference key="1">
    <citation type="journal article" date="1993" name="Mol. Gen. Genet.">
        <title>Identification of a new class of nitrogen fixation genes in Rhodobacter capsulatus: a putative membrane complex involved in electron transport to nitrogenase.</title>
        <authorList>
            <person name="Schmehl M."/>
            <person name="Jahn A."/>
            <person name="Meyer zu Vilsendorf A."/>
            <person name="Hennecke S."/>
            <person name="Masepohl B."/>
            <person name="Schuppler M."/>
            <person name="Marxer M."/>
            <person name="Oelze J."/>
            <person name="Klipp W."/>
        </authorList>
    </citation>
    <scope>NUCLEOTIDE SEQUENCE [GENOMIC DNA]</scope>
    <scope>FUNCTION</scope>
    <scope>GENE NAME</scope>
    <source>
        <strain>B10S</strain>
    </source>
</reference>
<reference key="2">
    <citation type="journal article" date="1998" name="Eur. J. Biochem.">
        <title>Overexpression in Escherichia coli of the rnf genes from Rhodobacter capsulatus -- characterization of two membrane-bound iron-sulfur proteins.</title>
        <authorList>
            <person name="Jouanneau Y."/>
            <person name="Jeong H.-S."/>
            <person name="Hugo N."/>
            <person name="Meyer C."/>
            <person name="Willison J.C."/>
        </authorList>
    </citation>
    <scope>NUCLEOTIDE SEQUENCE [GENOMIC DNA]</scope>
    <scope>PROTEIN SEQUENCE OF 1-5</scope>
    <scope>SUBUNIT</scope>
    <scope>SUBCELLULAR LOCATION</scope>
    <scope>INDUCTION</scope>
    <source>
        <strain>ATCC 33303 / B10</strain>
    </source>
</reference>
<accession>P0CZ14</accession>
<accession>O08056</accession>
<accession>Q07394</accession>
<feature type="chain" id="PRO_0000216277" description="Ion-translocating oxidoreductase complex subunit B">
    <location>
        <begin position="1"/>
        <end position="187"/>
    </location>
</feature>
<feature type="domain" description="4Fe-4S" evidence="2">
    <location>
        <begin position="29"/>
        <end position="88"/>
    </location>
</feature>
<feature type="domain" description="4Fe-4S ferredoxin-type 1" evidence="2">
    <location>
        <begin position="103"/>
        <end position="132"/>
    </location>
</feature>
<feature type="domain" description="4Fe-4S ferredoxin-type 2" evidence="2">
    <location>
        <begin position="133"/>
        <end position="162"/>
    </location>
</feature>
<feature type="region of interest" description="Hydrophobic" evidence="2">
    <location>
        <begin position="1"/>
        <end position="23"/>
    </location>
</feature>
<feature type="binding site" evidence="2">
    <location>
        <position position="46"/>
    </location>
    <ligand>
        <name>[4Fe-4S] cluster</name>
        <dbReference type="ChEBI" id="CHEBI:49883"/>
        <label>1</label>
    </ligand>
</feature>
<feature type="binding site" evidence="2">
    <location>
        <position position="49"/>
    </location>
    <ligand>
        <name>[4Fe-4S] cluster</name>
        <dbReference type="ChEBI" id="CHEBI:49883"/>
        <label>1</label>
    </ligand>
</feature>
<feature type="binding site" evidence="2">
    <location>
        <position position="54"/>
    </location>
    <ligand>
        <name>[4Fe-4S] cluster</name>
        <dbReference type="ChEBI" id="CHEBI:49883"/>
        <label>1</label>
    </ligand>
</feature>
<feature type="binding site" evidence="2">
    <location>
        <position position="71"/>
    </location>
    <ligand>
        <name>[4Fe-4S] cluster</name>
        <dbReference type="ChEBI" id="CHEBI:49883"/>
        <label>1</label>
    </ligand>
</feature>
<feature type="binding site" evidence="2">
    <location>
        <position position="112"/>
    </location>
    <ligand>
        <name>[4Fe-4S] cluster</name>
        <dbReference type="ChEBI" id="CHEBI:49883"/>
        <label>2</label>
    </ligand>
</feature>
<feature type="binding site" evidence="2">
    <location>
        <position position="115"/>
    </location>
    <ligand>
        <name>[4Fe-4S] cluster</name>
        <dbReference type="ChEBI" id="CHEBI:49883"/>
        <label>2</label>
    </ligand>
</feature>
<feature type="binding site" evidence="2">
    <location>
        <position position="118"/>
    </location>
    <ligand>
        <name>[4Fe-4S] cluster</name>
        <dbReference type="ChEBI" id="CHEBI:49883"/>
        <label>2</label>
    </ligand>
</feature>
<feature type="binding site" evidence="2">
    <location>
        <position position="122"/>
    </location>
    <ligand>
        <name>[4Fe-4S] cluster</name>
        <dbReference type="ChEBI" id="CHEBI:49883"/>
        <label>3</label>
    </ligand>
</feature>
<feature type="binding site" evidence="2">
    <location>
        <position position="142"/>
    </location>
    <ligand>
        <name>[4Fe-4S] cluster</name>
        <dbReference type="ChEBI" id="CHEBI:49883"/>
        <label>3</label>
    </ligand>
</feature>
<feature type="binding site" evidence="2">
    <location>
        <position position="145"/>
    </location>
    <ligand>
        <name>[4Fe-4S] cluster</name>
        <dbReference type="ChEBI" id="CHEBI:49883"/>
        <label>3</label>
    </ligand>
</feature>
<feature type="binding site" evidence="2">
    <location>
        <position position="148"/>
    </location>
    <ligand>
        <name>[4Fe-4S] cluster</name>
        <dbReference type="ChEBI" id="CHEBI:49883"/>
        <label>3</label>
    </ligand>
</feature>
<feature type="binding site" evidence="2">
    <location>
        <position position="152"/>
    </location>
    <ligand>
        <name>[4Fe-4S] cluster</name>
        <dbReference type="ChEBI" id="CHEBI:49883"/>
        <label>2</label>
    </ligand>
</feature>
<comment type="function">
    <text evidence="2 3">Part of a membrane-bound complex that couples electron transfer with translocation of ions across the membrane (By similarity). Required for nitrogen fixation. Involved in electron transfer to nitrogenase (PubMed:8264535).</text>
</comment>
<comment type="cofactor">
    <cofactor evidence="2">
        <name>[4Fe-4S] cluster</name>
        <dbReference type="ChEBI" id="CHEBI:49883"/>
    </cofactor>
    <text evidence="2">Binds 3 [4Fe-4S] clusters.</text>
</comment>
<comment type="subunit">
    <text evidence="2 7">The complex is composed of six subunits: RnfA, RnfB, RnfC, RnfD, RnfE and RnfG.</text>
</comment>
<comment type="subcellular location">
    <subcellularLocation>
        <location evidence="2 4">Cellular chromatophore membrane</location>
        <topology evidence="2 4">Peripheral membrane protein</topology>
        <orientation evidence="1 2">Cytoplasmic side</orientation>
    </subcellularLocation>
</comment>
<comment type="induction">
    <text evidence="4">Expression is reduced under iron-limiting conditions.</text>
</comment>
<comment type="similarity">
    <text evidence="2">Belongs to the 4Fe4S bacterial-type ferredoxin family. RnfB subfamily.</text>
</comment>
<protein>
    <recommendedName>
        <fullName evidence="2 6">Ion-translocating oxidoreductase complex subunit B</fullName>
        <ecNumber evidence="2 6">7.-.-.-</ecNumber>
    </recommendedName>
    <alternativeName>
        <fullName evidence="6">Nitrogen fixation protein RnfB</fullName>
    </alternativeName>
    <alternativeName>
        <fullName evidence="2 6">Rnf electron transport complex subunit B</fullName>
    </alternativeName>
</protein>
<keyword id="KW-0004">4Fe-4S</keyword>
<keyword id="KW-0903">Direct protein sequencing</keyword>
<keyword id="KW-0249">Electron transport</keyword>
<keyword id="KW-0408">Iron</keyword>
<keyword id="KW-0411">Iron-sulfur</keyword>
<keyword id="KW-0472">Membrane</keyword>
<keyword id="KW-0479">Metal-binding</keyword>
<keyword id="KW-0535">Nitrogen fixation</keyword>
<keyword id="KW-0677">Repeat</keyword>
<keyword id="KW-1278">Translocase</keyword>
<keyword id="KW-0813">Transport</keyword>
<sequence length="187" mass="19090">MIAAAASMSALGLGLGYLLGAAARKFHVETPPIVEEIAKILPGTNCGACGFPGCNGLAEAMAEGNAPVTACTPGGRDVALALAEIVTVEAGADAGPIAEIEPMVAFVFEDHCTGCQKCFKRCPTDAIVGGAKQIHTVVMDACIGCDACIEVCPTEAIVSRVKPKTLKTWYWDKPQPGLVAASAETAA</sequence>
<proteinExistence type="evidence at protein level"/>
<evidence type="ECO:0000250" key="1">
    <source>
        <dbReference type="UniProtKB" id="D5ARZ0"/>
    </source>
</evidence>
<evidence type="ECO:0000255" key="2">
    <source>
        <dbReference type="HAMAP-Rule" id="MF_00463"/>
    </source>
</evidence>
<evidence type="ECO:0000269" key="3">
    <source>
    </source>
</evidence>
<evidence type="ECO:0000269" key="4">
    <source>
    </source>
</evidence>
<evidence type="ECO:0000303" key="5">
    <source>
    </source>
</evidence>
<evidence type="ECO:0000305" key="6"/>
<evidence type="ECO:0000305" key="7">
    <source>
    </source>
</evidence>
<dbReference type="EC" id="7.-.-.-" evidence="2 6"/>
<dbReference type="EMBL" id="X72888">
    <property type="protein sequence ID" value="CAA51400.1"/>
    <property type="molecule type" value="Genomic_DNA"/>
</dbReference>
<dbReference type="EMBL" id="Y11913">
    <property type="protein sequence ID" value="CAA72669.1"/>
    <property type="molecule type" value="Genomic_DNA"/>
</dbReference>
<dbReference type="PIR" id="S39894">
    <property type="entry name" value="S39894"/>
</dbReference>
<dbReference type="RefSeq" id="WP_013068984.1">
    <property type="nucleotide sequence ID" value="NZ_VIBE01000016.1"/>
</dbReference>
<dbReference type="OMA" id="ITKCVPG"/>
<dbReference type="GO" id="GO:0005886">
    <property type="term" value="C:plasma membrane"/>
    <property type="evidence" value="ECO:0007669"/>
    <property type="project" value="UniProtKB-UniRule"/>
</dbReference>
<dbReference type="GO" id="GO:0042717">
    <property type="term" value="C:plasma membrane-derived chromatophore membrane"/>
    <property type="evidence" value="ECO:0007669"/>
    <property type="project" value="UniProtKB-SubCell"/>
</dbReference>
<dbReference type="GO" id="GO:0051539">
    <property type="term" value="F:4 iron, 4 sulfur cluster binding"/>
    <property type="evidence" value="ECO:0007669"/>
    <property type="project" value="UniProtKB-UniRule"/>
</dbReference>
<dbReference type="GO" id="GO:0009055">
    <property type="term" value="F:electron transfer activity"/>
    <property type="evidence" value="ECO:0007669"/>
    <property type="project" value="InterPro"/>
</dbReference>
<dbReference type="GO" id="GO:0046872">
    <property type="term" value="F:metal ion binding"/>
    <property type="evidence" value="ECO:0007669"/>
    <property type="project" value="UniProtKB-KW"/>
</dbReference>
<dbReference type="GO" id="GO:0022900">
    <property type="term" value="P:electron transport chain"/>
    <property type="evidence" value="ECO:0007669"/>
    <property type="project" value="UniProtKB-UniRule"/>
</dbReference>
<dbReference type="GO" id="GO:0009399">
    <property type="term" value="P:nitrogen fixation"/>
    <property type="evidence" value="ECO:0007669"/>
    <property type="project" value="UniProtKB-KW"/>
</dbReference>
<dbReference type="Gene3D" id="3.30.70.20">
    <property type="match status" value="1"/>
</dbReference>
<dbReference type="Gene3D" id="1.10.15.40">
    <property type="entry name" value="Electron transport complex subunit B, putative Fe-S cluster"/>
    <property type="match status" value="1"/>
</dbReference>
<dbReference type="HAMAP" id="MF_00463">
    <property type="entry name" value="RsxB_RnfB"/>
    <property type="match status" value="1"/>
</dbReference>
<dbReference type="InterPro" id="IPR007202">
    <property type="entry name" value="4Fe-4S_dom"/>
</dbReference>
<dbReference type="InterPro" id="IPR017896">
    <property type="entry name" value="4Fe4S_Fe-S-bd"/>
</dbReference>
<dbReference type="InterPro" id="IPR017900">
    <property type="entry name" value="4Fe4S_Fe_S_CS"/>
</dbReference>
<dbReference type="InterPro" id="IPR050395">
    <property type="entry name" value="4Fe4S_Ferredoxin_RnfB"/>
</dbReference>
<dbReference type="InterPro" id="IPR010207">
    <property type="entry name" value="Elect_transpt_cplx_RnfB/RsxB"/>
</dbReference>
<dbReference type="InterPro" id="IPR016463">
    <property type="entry name" value="RnfB/RsxB_Proteobac"/>
</dbReference>
<dbReference type="NCBIfam" id="TIGR01944">
    <property type="entry name" value="rnfB"/>
    <property type="match status" value="1"/>
</dbReference>
<dbReference type="PANTHER" id="PTHR43560">
    <property type="entry name" value="ION-TRANSLOCATING OXIDOREDUCTASE COMPLEX SUBUNIT B"/>
    <property type="match status" value="1"/>
</dbReference>
<dbReference type="PANTHER" id="PTHR43560:SF1">
    <property type="entry name" value="ION-TRANSLOCATING OXIDOREDUCTASE COMPLEX SUBUNIT B"/>
    <property type="match status" value="1"/>
</dbReference>
<dbReference type="Pfam" id="PF14697">
    <property type="entry name" value="Fer4_21"/>
    <property type="match status" value="1"/>
</dbReference>
<dbReference type="Pfam" id="PF04060">
    <property type="entry name" value="FeS"/>
    <property type="match status" value="1"/>
</dbReference>
<dbReference type="PIRSF" id="PIRSF005784">
    <property type="entry name" value="Elect_transpt_RnfB"/>
    <property type="match status" value="1"/>
</dbReference>
<dbReference type="SUPFAM" id="SSF54862">
    <property type="entry name" value="4Fe-4S ferredoxins"/>
    <property type="match status" value="1"/>
</dbReference>
<dbReference type="PROSITE" id="PS51656">
    <property type="entry name" value="4FE4S"/>
    <property type="match status" value="1"/>
</dbReference>
<dbReference type="PROSITE" id="PS00198">
    <property type="entry name" value="4FE4S_FER_1"/>
    <property type="match status" value="2"/>
</dbReference>
<dbReference type="PROSITE" id="PS51379">
    <property type="entry name" value="4FE4S_FER_2"/>
    <property type="match status" value="2"/>
</dbReference>
<gene>
    <name evidence="2 5" type="primary">rnfB</name>
</gene>
<organism>
    <name type="scientific">Rhodobacter capsulatus</name>
    <name type="common">Rhodopseudomonas capsulata</name>
    <dbReference type="NCBI Taxonomy" id="1061"/>
    <lineage>
        <taxon>Bacteria</taxon>
        <taxon>Pseudomonadati</taxon>
        <taxon>Pseudomonadota</taxon>
        <taxon>Alphaproteobacteria</taxon>
        <taxon>Rhodobacterales</taxon>
        <taxon>Rhodobacter group</taxon>
        <taxon>Rhodobacter</taxon>
    </lineage>
</organism>